<keyword id="KW-0010">Activator</keyword>
<keyword id="KW-0175">Coiled coil</keyword>
<keyword id="KW-0238">DNA-binding</keyword>
<keyword id="KW-0539">Nucleus</keyword>
<keyword id="KW-1185">Reference proteome</keyword>
<keyword id="KW-0804">Transcription</keyword>
<keyword id="KW-0805">Transcription regulation</keyword>
<proteinExistence type="evidence at protein level"/>
<protein>
    <recommendedName>
        <fullName>TGACG-sequence-specific DNA-binding protein TGA-2.1</fullName>
        <shortName>TGA2.1</shortName>
    </recommendedName>
</protein>
<feature type="chain" id="PRO_0000076548" description="TGACG-sequence-specific DNA-binding protein TGA-2.1">
    <location>
        <begin position="1"/>
        <end position="456"/>
    </location>
</feature>
<feature type="domain" description="bZIP" evidence="2">
    <location>
        <begin position="166"/>
        <end position="229"/>
    </location>
</feature>
<feature type="domain" description="DOG1" evidence="3">
    <location>
        <begin position="233"/>
        <end position="450"/>
    </location>
</feature>
<feature type="region of interest" description="Disordered" evidence="4">
    <location>
        <begin position="1"/>
        <end position="41"/>
    </location>
</feature>
<feature type="region of interest" description="Disordered" evidence="4">
    <location>
        <begin position="115"/>
        <end position="170"/>
    </location>
</feature>
<feature type="region of interest" description="Basic motif" evidence="2">
    <location>
        <begin position="168"/>
        <end position="188"/>
    </location>
</feature>
<feature type="region of interest" description="Leucine-zipper" evidence="2">
    <location>
        <begin position="194"/>
        <end position="208"/>
    </location>
</feature>
<feature type="coiled-coil region" evidence="1">
    <location>
        <begin position="167"/>
        <end position="220"/>
    </location>
</feature>
<feature type="compositionally biased region" description="Polar residues" evidence="4">
    <location>
        <begin position="9"/>
        <end position="41"/>
    </location>
</feature>
<feature type="compositionally biased region" description="Polar residues" evidence="4">
    <location>
        <begin position="125"/>
        <end position="141"/>
    </location>
</feature>
<feature type="compositionally biased region" description="Basic and acidic residues" evidence="4">
    <location>
        <begin position="158"/>
        <end position="169"/>
    </location>
</feature>
<gene>
    <name type="primary">TGA21</name>
</gene>
<accession>O24160</accession>
<name>TGA21_TOBAC</name>
<evidence type="ECO:0000255" key="1"/>
<evidence type="ECO:0000255" key="2">
    <source>
        <dbReference type="PROSITE-ProRule" id="PRU00978"/>
    </source>
</evidence>
<evidence type="ECO:0000255" key="3">
    <source>
        <dbReference type="PROSITE-ProRule" id="PRU01147"/>
    </source>
</evidence>
<evidence type="ECO:0000256" key="4">
    <source>
        <dbReference type="SAM" id="MobiDB-lite"/>
    </source>
</evidence>
<evidence type="ECO:0000305" key="5"/>
<reference key="1">
    <citation type="online journal article" date="1997" name="Plant Gene Register">
        <title>Isolation of TGA2.1, a member of a new subclass of the TGA family of bZIP transcription factors in Nicotiana tabacum.</title>
        <authorList>
            <person name="Niggeweg R."/>
            <person name="Gatz C."/>
        </authorList>
        <locator>PGR97-060</locator>
    </citation>
    <scope>NUCLEOTIDE SEQUENCE [MRNA]</scope>
    <source>
        <strain>cv. SR1</strain>
        <tissue>Leaf</tissue>
    </source>
</reference>
<reference key="2">
    <citation type="journal article" date="2000" name="Plant Mol. Biol.">
        <title>Tobacco TGA factors differ with respect to interaction with NPR1, activation potential and DNA-binding properties.</title>
        <authorList>
            <person name="Niggeweg R."/>
            <person name="Thurow C."/>
            <person name="Weigel R."/>
            <person name="Pfitzner U."/>
            <person name="Gatz C."/>
        </authorList>
    </citation>
    <scope>CHARACTERIZATION</scope>
</reference>
<comment type="function">
    <text>Transcriptional activator that binds specifically to the DNA sequence 5'-TGACG-3'. Recognizes ocs elements like the as-1 motif of the cauliflower mosaic virus 35S promoter. Binding to the as-1-like cis elements mediate auxin- and salicylic acid-inducible transcription.</text>
</comment>
<comment type="subunit">
    <text>Can form heterodimer with TGA2.2.</text>
</comment>
<comment type="subcellular location">
    <subcellularLocation>
        <location evidence="2">Nucleus</location>
    </subcellularLocation>
</comment>
<comment type="similarity">
    <text evidence="5">Belongs to the bZIP family.</text>
</comment>
<sequence>MASKIGTAGNRSGTTGMPSFISQIPVSNPMGTEANNTNTSRMSDFGVLEQYLGFRIGDGANVNRSPLFNSTSATNPAVGFEVSGTINRTLAPSNTSLPTATPRSQTMLLQSNLVSASGTHHENWGESNMADSGSRTDTSTDMDGDDKNQLIEAGQSSDKSKEKVLDQKTLRRLAQNREAARKSRLRKKAYVQQLENSRLKLSQLEQDLQRARQQGKYISNIADQSNGVGANGPLAFDAEYSRWLEEHNKHINELRTAVNAHASDPELRSIVNNVTAHFDEVFRVKGNAAKADVFHVLSGMWKTPAERCFMWIGGFRPSELLKLLVNQLEPLTEQQLAGIYNLQQSSHQAEDALSQGMEALQQSLAETLANGSPAPEGSSGDVANYMGQMAMAMGKLGTLEGFLRQADNLRQQTLQQMHRVLTTRQSARALLAINEYFSRLRALSSLWLARPREQLV</sequence>
<organism>
    <name type="scientific">Nicotiana tabacum</name>
    <name type="common">Common tobacco</name>
    <dbReference type="NCBI Taxonomy" id="4097"/>
    <lineage>
        <taxon>Eukaryota</taxon>
        <taxon>Viridiplantae</taxon>
        <taxon>Streptophyta</taxon>
        <taxon>Embryophyta</taxon>
        <taxon>Tracheophyta</taxon>
        <taxon>Spermatophyta</taxon>
        <taxon>Magnoliopsida</taxon>
        <taxon>eudicotyledons</taxon>
        <taxon>Gunneridae</taxon>
        <taxon>Pentapetalae</taxon>
        <taxon>asterids</taxon>
        <taxon>lamiids</taxon>
        <taxon>Solanales</taxon>
        <taxon>Solanaceae</taxon>
        <taxon>Nicotianoideae</taxon>
        <taxon>Nicotianeae</taxon>
        <taxon>Nicotiana</taxon>
    </lineage>
</organism>
<dbReference type="EMBL" id="U90214">
    <property type="protein sequence ID" value="AAB68661.1"/>
    <property type="molecule type" value="mRNA"/>
</dbReference>
<dbReference type="PIR" id="T03935">
    <property type="entry name" value="T03935"/>
</dbReference>
<dbReference type="RefSeq" id="NP_001312268.1">
    <property type="nucleotide sequence ID" value="NM_001325339.1"/>
</dbReference>
<dbReference type="SMR" id="O24160"/>
<dbReference type="IntAct" id="O24160">
    <property type="interactions" value="1"/>
</dbReference>
<dbReference type="STRING" id="4097.O24160"/>
<dbReference type="PaxDb" id="4097-O24160"/>
<dbReference type="GeneID" id="107782457"/>
<dbReference type="KEGG" id="nta:107782457"/>
<dbReference type="OMA" id="TSRMSEF"/>
<dbReference type="OrthoDB" id="2015618at2759"/>
<dbReference type="PhylomeDB" id="O24160"/>
<dbReference type="Proteomes" id="UP000084051">
    <property type="component" value="Unplaced"/>
</dbReference>
<dbReference type="GO" id="GO:0005634">
    <property type="term" value="C:nucleus"/>
    <property type="evidence" value="ECO:0007669"/>
    <property type="project" value="UniProtKB-SubCell"/>
</dbReference>
<dbReference type="GO" id="GO:0003700">
    <property type="term" value="F:DNA-binding transcription factor activity"/>
    <property type="evidence" value="ECO:0007669"/>
    <property type="project" value="InterPro"/>
</dbReference>
<dbReference type="GO" id="GO:0043565">
    <property type="term" value="F:sequence-specific DNA binding"/>
    <property type="evidence" value="ECO:0007669"/>
    <property type="project" value="InterPro"/>
</dbReference>
<dbReference type="GO" id="GO:0006351">
    <property type="term" value="P:DNA-templated transcription"/>
    <property type="evidence" value="ECO:0007669"/>
    <property type="project" value="InterPro"/>
</dbReference>
<dbReference type="CDD" id="cd14708">
    <property type="entry name" value="bZIP_HBP1b-like"/>
    <property type="match status" value="1"/>
</dbReference>
<dbReference type="FunFam" id="1.20.5.170:FF:000019">
    <property type="entry name" value="BZIP family transcription factor"/>
    <property type="match status" value="1"/>
</dbReference>
<dbReference type="Gene3D" id="1.20.5.170">
    <property type="match status" value="1"/>
</dbReference>
<dbReference type="InterPro" id="IPR004827">
    <property type="entry name" value="bZIP"/>
</dbReference>
<dbReference type="InterPro" id="IPR046347">
    <property type="entry name" value="bZIP_sf"/>
</dbReference>
<dbReference type="InterPro" id="IPR025422">
    <property type="entry name" value="TGA_domain"/>
</dbReference>
<dbReference type="PANTHER" id="PTHR45693:SF15">
    <property type="entry name" value="TGACG-SEQUENCE-SPECIFIC DNA-BINDING PROTEIN TGA-2.1"/>
    <property type="match status" value="1"/>
</dbReference>
<dbReference type="PANTHER" id="PTHR45693">
    <property type="entry name" value="TRANSCRIPTION FACTOR TGA9"/>
    <property type="match status" value="1"/>
</dbReference>
<dbReference type="Pfam" id="PF00170">
    <property type="entry name" value="bZIP_1"/>
    <property type="match status" value="1"/>
</dbReference>
<dbReference type="Pfam" id="PF14144">
    <property type="entry name" value="DOG1"/>
    <property type="match status" value="1"/>
</dbReference>
<dbReference type="SMART" id="SM00338">
    <property type="entry name" value="BRLZ"/>
    <property type="match status" value="1"/>
</dbReference>
<dbReference type="SUPFAM" id="SSF57959">
    <property type="entry name" value="Leucine zipper domain"/>
    <property type="match status" value="1"/>
</dbReference>
<dbReference type="PROSITE" id="PS50217">
    <property type="entry name" value="BZIP"/>
    <property type="match status" value="1"/>
</dbReference>
<dbReference type="PROSITE" id="PS00036">
    <property type="entry name" value="BZIP_BASIC"/>
    <property type="match status" value="1"/>
</dbReference>
<dbReference type="PROSITE" id="PS51806">
    <property type="entry name" value="DOG1"/>
    <property type="match status" value="1"/>
</dbReference>